<protein>
    <recommendedName>
        <fullName>Protamine-2</fullName>
    </recommendedName>
    <alternativeName>
        <fullName>Sperm histone P2</fullName>
    </alternativeName>
    <alternativeName>
        <fullName>Sperm protamine P2</fullName>
    </alternativeName>
</protein>
<reference key="1">
    <citation type="submission" date="1999-10" db="EMBL/GenBank/DDBJ databases">
        <title>Positive Darwinian selection on the lineage leading to humans.</title>
        <authorList>
            <person name="Karanth P.K."/>
            <person name="Stewart C.-B."/>
            <person name="Holt R.A."/>
            <person name="de Koning J."/>
            <person name="Messier W."/>
        </authorList>
    </citation>
    <scope>NUCLEOTIDE SEQUENCE [GENOMIC DNA]</scope>
</reference>
<feature type="chain" id="PRO_0000191598" description="Protamine-2">
    <location>
        <begin position="1"/>
        <end position="103"/>
    </location>
</feature>
<feature type="region of interest" description="Disordered" evidence="3">
    <location>
        <begin position="1"/>
        <end position="103"/>
    </location>
</feature>
<feature type="compositionally biased region" description="Basic and acidic residues" evidence="3">
    <location>
        <begin position="8"/>
        <end position="17"/>
    </location>
</feature>
<feature type="compositionally biased region" description="Low complexity" evidence="3">
    <location>
        <begin position="18"/>
        <end position="29"/>
    </location>
</feature>
<feature type="compositionally biased region" description="Basic and acidic residues" evidence="3">
    <location>
        <begin position="39"/>
        <end position="48"/>
    </location>
</feature>
<feature type="compositionally biased region" description="Basic residues" evidence="3">
    <location>
        <begin position="49"/>
        <end position="103"/>
    </location>
</feature>
<feature type="modified residue" description="Phosphoserine" evidence="2">
    <location>
        <position position="8"/>
    </location>
</feature>
<feature type="modified residue" description="Phosphoserine" evidence="2">
    <location>
        <position position="10"/>
    </location>
</feature>
<feature type="modified residue" description="Phosphoserine" evidence="2">
    <location>
        <position position="37"/>
    </location>
</feature>
<accession>Q9GKM0</accession>
<sequence length="103" mass="13154">MVRYRTRSLSERPHEVHGQQVHGQDQGHNGQEEQGLSPEHVEVYERTHQGHSHHRRRRCSQRRLHRIHRRRHRSCRRRRRRSCRHRRRHRRGCRTRRRRCRRY</sequence>
<name>PRM2_ERYPA</name>
<proteinExistence type="evidence at transcript level"/>
<keyword id="KW-0158">Chromosome</keyword>
<keyword id="KW-0217">Developmental protein</keyword>
<keyword id="KW-0221">Differentiation</keyword>
<keyword id="KW-0226">DNA condensation</keyword>
<keyword id="KW-0238">DNA-binding</keyword>
<keyword id="KW-0544">Nucleosome core</keyword>
<keyword id="KW-0539">Nucleus</keyword>
<keyword id="KW-0597">Phosphoprotein</keyword>
<keyword id="KW-0744">Spermatogenesis</keyword>
<comment type="function">
    <text evidence="1">Protamines substitute for histones in the chromatin of sperm during the haploid phase of spermatogenesis. They compact sperm DNA into a highly condensed, stable and inactive complex.</text>
</comment>
<comment type="subunit">
    <text evidence="1">Interacts with TDRP.</text>
</comment>
<comment type="subcellular location">
    <subcellularLocation>
        <location evidence="1">Nucleus</location>
    </subcellularLocation>
    <subcellularLocation>
        <location evidence="1">Chromosome</location>
    </subcellularLocation>
</comment>
<comment type="tissue specificity">
    <text>Testis.</text>
</comment>
<comment type="PTM">
    <text evidence="1">Proteolytic processing into mature chains is required for histone eviction during spermatogenesis. Transition proteins (TNP1 and TNP2) are required for processing.</text>
</comment>
<comment type="similarity">
    <text evidence="4">Belongs to the protamine P2 family.</text>
</comment>
<evidence type="ECO:0000250" key="1">
    <source>
        <dbReference type="UniProtKB" id="P07978"/>
    </source>
</evidence>
<evidence type="ECO:0000250" key="2">
    <source>
        <dbReference type="UniProtKB" id="P11248"/>
    </source>
</evidence>
<evidence type="ECO:0000256" key="3">
    <source>
        <dbReference type="SAM" id="MobiDB-lite"/>
    </source>
</evidence>
<evidence type="ECO:0000305" key="4"/>
<organism>
    <name type="scientific">Erythrocebus patas</name>
    <name type="common">Red guenon</name>
    <name type="synonym">Cercopithecus patas</name>
    <dbReference type="NCBI Taxonomy" id="9538"/>
    <lineage>
        <taxon>Eukaryota</taxon>
        <taxon>Metazoa</taxon>
        <taxon>Chordata</taxon>
        <taxon>Craniata</taxon>
        <taxon>Vertebrata</taxon>
        <taxon>Euteleostomi</taxon>
        <taxon>Mammalia</taxon>
        <taxon>Eutheria</taxon>
        <taxon>Euarchontoglires</taxon>
        <taxon>Primates</taxon>
        <taxon>Haplorrhini</taxon>
        <taxon>Catarrhini</taxon>
        <taxon>Cercopithecidae</taxon>
        <taxon>Cercopithecinae</taxon>
        <taxon>Erythrocebus</taxon>
    </lineage>
</organism>
<dbReference type="EMBL" id="AF195645">
    <property type="protein sequence ID" value="AAG42203.1"/>
    <property type="molecule type" value="Genomic_DNA"/>
</dbReference>
<dbReference type="EMBL" id="AF195644">
    <property type="protein sequence ID" value="AAG42203.1"/>
    <property type="status" value="JOINED"/>
    <property type="molecule type" value="Genomic_DNA"/>
</dbReference>
<dbReference type="GO" id="GO:0000786">
    <property type="term" value="C:nucleosome"/>
    <property type="evidence" value="ECO:0007669"/>
    <property type="project" value="UniProtKB-KW"/>
</dbReference>
<dbReference type="GO" id="GO:0005634">
    <property type="term" value="C:nucleus"/>
    <property type="evidence" value="ECO:0007669"/>
    <property type="project" value="UniProtKB-SubCell"/>
</dbReference>
<dbReference type="GO" id="GO:0003677">
    <property type="term" value="F:DNA binding"/>
    <property type="evidence" value="ECO:0007669"/>
    <property type="project" value="UniProtKB-KW"/>
</dbReference>
<dbReference type="GO" id="GO:0030261">
    <property type="term" value="P:chromosome condensation"/>
    <property type="evidence" value="ECO:0007669"/>
    <property type="project" value="UniProtKB-KW"/>
</dbReference>
<dbReference type="GO" id="GO:0006997">
    <property type="term" value="P:nucleus organization"/>
    <property type="evidence" value="ECO:0007669"/>
    <property type="project" value="TreeGrafter"/>
</dbReference>
<dbReference type="GO" id="GO:0007286">
    <property type="term" value="P:spermatid development"/>
    <property type="evidence" value="ECO:0007669"/>
    <property type="project" value="InterPro"/>
</dbReference>
<dbReference type="GO" id="GO:0007283">
    <property type="term" value="P:spermatogenesis"/>
    <property type="evidence" value="ECO:0000250"/>
    <property type="project" value="UniProtKB"/>
</dbReference>
<dbReference type="InterPro" id="IPR000492">
    <property type="entry name" value="PRM2"/>
</dbReference>
<dbReference type="PANTHER" id="PTHR21341">
    <property type="entry name" value="PROTAMINE-2"/>
    <property type="match status" value="1"/>
</dbReference>
<dbReference type="PANTHER" id="PTHR21341:SF2">
    <property type="entry name" value="PROTAMINE-2"/>
    <property type="match status" value="1"/>
</dbReference>
<dbReference type="Pfam" id="PF00841">
    <property type="entry name" value="Protamine_P2"/>
    <property type="match status" value="1"/>
</dbReference>
<gene>
    <name type="primary">PRM2</name>
</gene>